<keyword id="KW-0021">Allosteric enzyme</keyword>
<keyword id="KW-0035">Amyloplast</keyword>
<keyword id="KW-0067">ATP-binding</keyword>
<keyword id="KW-0150">Chloroplast</keyword>
<keyword id="KW-0547">Nucleotide-binding</keyword>
<keyword id="KW-0548">Nucleotidyltransferase</keyword>
<keyword id="KW-0934">Plastid</keyword>
<keyword id="KW-1185">Reference proteome</keyword>
<keyword id="KW-0750">Starch biosynthesis</keyword>
<keyword id="KW-0808">Transferase</keyword>
<sequence length="470" mass="52253">NKIKPGVAYSVITTENDTQTVFVDMPRLERRRANPKDVAAVILGGGEGTKLFPLTSRTATPAVPVGGCYRLIDIPMSNCINSAINKIFVLTQYNSAPLNRHIARTYFGNGVSFGDGFVEVLAATQTPGEAGKKWFQGTADAVRKFIWVFEDAKNKNIENIVVLSGDHLYRMDYMELVQNHIDRNADITLSCAPAEDSRASDFGLVKIDSRGRVVQFAEKPKGFDLKAMQVDTTLVGLSPQDAKKSPYIASMGVYVFKTDVLLKLLKWSYPTSNDFGSEIIPAAIDDYNVQAYIFKDYWEDIGTIKSFYNASLALTQEFPEFQFYDPKTPFYTSPRFLPPTKIDNCKIKDAIISHGCFLRDCSVEHSIVGERSRLDCGVELKDTFMMGADYYQTESEIASLLAEGKVPIGIGENTKIRKCIIDKNAKIGKNVSIINKDGVQEADRPEEGFYIRSGIIIILEKATIRDGTVI</sequence>
<protein>
    <recommendedName>
        <fullName>Glucose-1-phosphate adenylyltransferase large subunit 1</fullName>
        <ecNumber>2.7.7.27</ecNumber>
    </recommendedName>
    <alternativeName>
        <fullName>ADP-glucose pyrophosphorylase</fullName>
    </alternativeName>
    <alternativeName>
        <fullName>ADP-glucose synthase</fullName>
    </alternativeName>
    <alternativeName>
        <fullName>AGPase S</fullName>
    </alternativeName>
    <alternativeName>
        <fullName>Alpha-D-glucose-1-phosphate adenyl transferase</fullName>
    </alternativeName>
</protein>
<name>GLGL1_SOLTU</name>
<comment type="function">
    <text>This protein plays a role in synthesis of starch. It catalyzes the synthesis of the activated glycosyl donor, ADP-glucose from Glc-1-P and ATP.</text>
</comment>
<comment type="catalytic activity">
    <reaction>
        <text>alpha-D-glucose 1-phosphate + ATP + H(+) = ADP-alpha-D-glucose + diphosphate</text>
        <dbReference type="Rhea" id="RHEA:12120"/>
        <dbReference type="ChEBI" id="CHEBI:15378"/>
        <dbReference type="ChEBI" id="CHEBI:30616"/>
        <dbReference type="ChEBI" id="CHEBI:33019"/>
        <dbReference type="ChEBI" id="CHEBI:57498"/>
        <dbReference type="ChEBI" id="CHEBI:58601"/>
        <dbReference type="EC" id="2.7.7.27"/>
    </reaction>
</comment>
<comment type="activity regulation">
    <text>Activated by 3'phosphoglycerate, inhibited by orthophosphate. Allosteric regulation.</text>
</comment>
<comment type="pathway">
    <text>Glycan biosynthesis; starch biosynthesis.</text>
</comment>
<comment type="subunit">
    <text>Heterotetramer.</text>
</comment>
<comment type="interaction">
    <interactant intactId="EBI-15812120">
        <id>Q00081</id>
    </interactant>
    <interactant intactId="EBI-15812097">
        <id>P23509</id>
    </interactant>
    <organismsDiffer>false</organismsDiffer>
    <experiments>2</experiments>
</comment>
<comment type="subcellular location">
    <subcellularLocation>
        <location>Plastid</location>
        <location>Chloroplast</location>
    </subcellularLocation>
    <subcellularLocation>
        <location>Plastid</location>
        <location>Amyloplast</location>
    </subcellularLocation>
    <text>Found in the chloroplast in leaf. Found in the plastid in the developing endosperm.</text>
</comment>
<comment type="tissue specificity">
    <text>Prominently expressed in the leaves and a weaker expression is seen in the tubers.</text>
</comment>
<comment type="similarity">
    <text evidence="1">Belongs to the bacterial/plant glucose-1-phosphate adenylyltransferase family.</text>
</comment>
<gene>
    <name type="primary">AGPS1</name>
</gene>
<evidence type="ECO:0000305" key="1"/>
<proteinExistence type="evidence at protein level"/>
<feature type="chain" id="PRO_0000195357" description="Glucose-1-phosphate adenylyltransferase large subunit 1">
    <location>
        <begin position="1" status="less than"/>
        <end position="470"/>
    </location>
</feature>
<feature type="non-terminal residue">
    <location>
        <position position="1"/>
    </location>
</feature>
<organism>
    <name type="scientific">Solanum tuberosum</name>
    <name type="common">Potato</name>
    <dbReference type="NCBI Taxonomy" id="4113"/>
    <lineage>
        <taxon>Eukaryota</taxon>
        <taxon>Viridiplantae</taxon>
        <taxon>Streptophyta</taxon>
        <taxon>Embryophyta</taxon>
        <taxon>Tracheophyta</taxon>
        <taxon>Spermatophyta</taxon>
        <taxon>Magnoliopsida</taxon>
        <taxon>eudicotyledons</taxon>
        <taxon>Gunneridae</taxon>
        <taxon>Pentapetalae</taxon>
        <taxon>asterids</taxon>
        <taxon>lamiids</taxon>
        <taxon>Solanales</taxon>
        <taxon>Solanaceae</taxon>
        <taxon>Solanoideae</taxon>
        <taxon>Solaneae</taxon>
        <taxon>Solanum</taxon>
    </lineage>
</organism>
<accession>Q00081</accession>
<reference key="1">
    <citation type="journal article" date="1991" name="Plant Mol. Biol.">
        <title>Comparison of the primary sequences of two potato tuber ADP-glucose pyrophosphorylase subunits.</title>
        <authorList>
            <person name="Nakata P.A."/>
            <person name="Greene T.W."/>
            <person name="Anderson J.M."/>
            <person name="Smith-White B.J."/>
            <person name="Okita T.W."/>
            <person name="Preiss J."/>
        </authorList>
    </citation>
    <scope>NUCLEOTIDE SEQUENCE [MRNA]</scope>
    <source>
        <strain>cv. Russet Burbank-0</strain>
        <tissue>Tuber</tissue>
    </source>
</reference>
<dbReference type="EC" id="2.7.7.27"/>
<dbReference type="EMBL" id="X61187">
    <property type="protein sequence ID" value="CAA43490.1"/>
    <property type="molecule type" value="mRNA"/>
</dbReference>
<dbReference type="PIR" id="S18237">
    <property type="entry name" value="S18237"/>
</dbReference>
<dbReference type="SMR" id="Q00081"/>
<dbReference type="DIP" id="DIP-48348N"/>
<dbReference type="FunCoup" id="Q00081">
    <property type="interactions" value="197"/>
</dbReference>
<dbReference type="IntAct" id="Q00081">
    <property type="interactions" value="1"/>
</dbReference>
<dbReference type="STRING" id="4113.Q00081"/>
<dbReference type="PaxDb" id="4113-PGSC0003DMT400001935"/>
<dbReference type="eggNOG" id="KOG1322">
    <property type="taxonomic scope" value="Eukaryota"/>
</dbReference>
<dbReference type="InParanoid" id="Q00081"/>
<dbReference type="BRENDA" id="2.7.7.27">
    <property type="organism ID" value="5757"/>
</dbReference>
<dbReference type="UniPathway" id="UPA00152"/>
<dbReference type="Proteomes" id="UP000011115">
    <property type="component" value="Unassembled WGS sequence"/>
</dbReference>
<dbReference type="GO" id="GO:0009501">
    <property type="term" value="C:amyloplast"/>
    <property type="evidence" value="ECO:0007669"/>
    <property type="project" value="UniProtKB-SubCell"/>
</dbReference>
<dbReference type="GO" id="GO:0009507">
    <property type="term" value="C:chloroplast"/>
    <property type="evidence" value="ECO:0007669"/>
    <property type="project" value="UniProtKB-SubCell"/>
</dbReference>
<dbReference type="GO" id="GO:0005524">
    <property type="term" value="F:ATP binding"/>
    <property type="evidence" value="ECO:0007669"/>
    <property type="project" value="UniProtKB-KW"/>
</dbReference>
<dbReference type="GO" id="GO:0008878">
    <property type="term" value="F:glucose-1-phosphate adenylyltransferase activity"/>
    <property type="evidence" value="ECO:0007669"/>
    <property type="project" value="UniProtKB-EC"/>
</dbReference>
<dbReference type="GO" id="GO:0005978">
    <property type="term" value="P:glycogen biosynthetic process"/>
    <property type="evidence" value="ECO:0007669"/>
    <property type="project" value="InterPro"/>
</dbReference>
<dbReference type="GO" id="GO:0019252">
    <property type="term" value="P:starch biosynthetic process"/>
    <property type="evidence" value="ECO:0007669"/>
    <property type="project" value="UniProtKB-UniPathway"/>
</dbReference>
<dbReference type="CDD" id="cd02508">
    <property type="entry name" value="ADP_Glucose_PP"/>
    <property type="match status" value="1"/>
</dbReference>
<dbReference type="CDD" id="cd04651">
    <property type="entry name" value="LbH_G1P_AT_C"/>
    <property type="match status" value="1"/>
</dbReference>
<dbReference type="FunFam" id="2.160.10.10:FF:000010">
    <property type="entry name" value="Glucose-1-phosphate adenylyltransferase"/>
    <property type="match status" value="1"/>
</dbReference>
<dbReference type="FunFam" id="3.90.550.10:FF:000030">
    <property type="entry name" value="Glucose-1-phosphate adenylyltransferase"/>
    <property type="match status" value="1"/>
</dbReference>
<dbReference type="Gene3D" id="2.160.10.10">
    <property type="entry name" value="Hexapeptide repeat proteins"/>
    <property type="match status" value="1"/>
</dbReference>
<dbReference type="Gene3D" id="3.90.550.10">
    <property type="entry name" value="Spore Coat Polysaccharide Biosynthesis Protein SpsA, Chain A"/>
    <property type="match status" value="1"/>
</dbReference>
<dbReference type="InterPro" id="IPR011831">
    <property type="entry name" value="ADP-Glc_PPase"/>
</dbReference>
<dbReference type="InterPro" id="IPR005836">
    <property type="entry name" value="ADP_Glu_pyroP_CS"/>
</dbReference>
<dbReference type="InterPro" id="IPR005835">
    <property type="entry name" value="NTP_transferase_dom"/>
</dbReference>
<dbReference type="InterPro" id="IPR029044">
    <property type="entry name" value="Nucleotide-diphossugar_trans"/>
</dbReference>
<dbReference type="InterPro" id="IPR011004">
    <property type="entry name" value="Trimer_LpxA-like_sf"/>
</dbReference>
<dbReference type="NCBIfam" id="TIGR02091">
    <property type="entry name" value="glgC"/>
    <property type="match status" value="1"/>
</dbReference>
<dbReference type="NCBIfam" id="NF002772">
    <property type="entry name" value="PRK02862.1"/>
    <property type="match status" value="1"/>
</dbReference>
<dbReference type="PANTHER" id="PTHR43523:SF4">
    <property type="entry name" value="GLUCOSE-1-PHOSPHATE ADENYLYLTRANSFERASE LARGE SUBUNIT 3, CHLOROPLASTIC"/>
    <property type="match status" value="1"/>
</dbReference>
<dbReference type="PANTHER" id="PTHR43523">
    <property type="entry name" value="GLUCOSE-1-PHOSPHATE ADENYLYLTRANSFERASE-RELATED"/>
    <property type="match status" value="1"/>
</dbReference>
<dbReference type="Pfam" id="PF25247">
    <property type="entry name" value="LbH_GLGC"/>
    <property type="match status" value="1"/>
</dbReference>
<dbReference type="Pfam" id="PF00483">
    <property type="entry name" value="NTP_transferase"/>
    <property type="match status" value="1"/>
</dbReference>
<dbReference type="SUPFAM" id="SSF53448">
    <property type="entry name" value="Nucleotide-diphospho-sugar transferases"/>
    <property type="match status" value="1"/>
</dbReference>
<dbReference type="SUPFAM" id="SSF51161">
    <property type="entry name" value="Trimeric LpxA-like enzymes"/>
    <property type="match status" value="1"/>
</dbReference>
<dbReference type="PROSITE" id="PS00808">
    <property type="entry name" value="ADP_GLC_PYROPHOSPH_1"/>
    <property type="match status" value="1"/>
</dbReference>
<dbReference type="PROSITE" id="PS00809">
    <property type="entry name" value="ADP_GLC_PYROPHOSPH_2"/>
    <property type="match status" value="1"/>
</dbReference>
<dbReference type="PROSITE" id="PS00810">
    <property type="entry name" value="ADP_GLC_PYROPHOSPH_3"/>
    <property type="match status" value="1"/>
</dbReference>